<keyword id="KW-0030">Aminoacyl-tRNA synthetase</keyword>
<keyword id="KW-0067">ATP-binding</keyword>
<keyword id="KW-0963">Cytoplasm</keyword>
<keyword id="KW-0436">Ligase</keyword>
<keyword id="KW-0479">Metal-binding</keyword>
<keyword id="KW-0547">Nucleotide-binding</keyword>
<keyword id="KW-0648">Protein biosynthesis</keyword>
<keyword id="KW-1185">Reference proteome</keyword>
<keyword id="KW-0694">RNA-binding</keyword>
<keyword id="KW-0820">tRNA-binding</keyword>
<keyword id="KW-0862">Zinc</keyword>
<accession>Q8E0C4</accession>
<evidence type="ECO:0000255" key="1">
    <source>
        <dbReference type="HAMAP-Rule" id="MF_00036"/>
    </source>
</evidence>
<organism>
    <name type="scientific">Streptococcus agalactiae serotype V (strain ATCC BAA-611 / 2603 V/R)</name>
    <dbReference type="NCBI Taxonomy" id="208435"/>
    <lineage>
        <taxon>Bacteria</taxon>
        <taxon>Bacillati</taxon>
        <taxon>Bacillota</taxon>
        <taxon>Bacilli</taxon>
        <taxon>Lactobacillales</taxon>
        <taxon>Streptococcaceae</taxon>
        <taxon>Streptococcus</taxon>
    </lineage>
</organism>
<reference key="1">
    <citation type="journal article" date="2002" name="Proc. Natl. Acad. Sci. U.S.A.">
        <title>Complete genome sequence and comparative genomic analysis of an emerging human pathogen, serotype V Streptococcus agalactiae.</title>
        <authorList>
            <person name="Tettelin H."/>
            <person name="Masignani V."/>
            <person name="Cieslewicz M.J."/>
            <person name="Eisen J.A."/>
            <person name="Peterson S.N."/>
            <person name="Wessels M.R."/>
            <person name="Paulsen I.T."/>
            <person name="Nelson K.E."/>
            <person name="Margarit I."/>
            <person name="Read T.D."/>
            <person name="Madoff L.C."/>
            <person name="Wolf A.M."/>
            <person name="Beanan M.J."/>
            <person name="Brinkac L.M."/>
            <person name="Daugherty S.C."/>
            <person name="DeBoy R.T."/>
            <person name="Durkin A.S."/>
            <person name="Kolonay J.F."/>
            <person name="Madupu R."/>
            <person name="Lewis M.R."/>
            <person name="Radune D."/>
            <person name="Fedorova N.B."/>
            <person name="Scanlan D."/>
            <person name="Khouri H.M."/>
            <person name="Mulligan S."/>
            <person name="Carty H.A."/>
            <person name="Cline R.T."/>
            <person name="Van Aken S.E."/>
            <person name="Gill J."/>
            <person name="Scarselli M."/>
            <person name="Mora M."/>
            <person name="Iacobini E.T."/>
            <person name="Brettoni C."/>
            <person name="Galli G."/>
            <person name="Mariani M."/>
            <person name="Vegni F."/>
            <person name="Maione D."/>
            <person name="Rinaudo D."/>
            <person name="Rappuoli R."/>
            <person name="Telford J.L."/>
            <person name="Kasper D.L."/>
            <person name="Grandi G."/>
            <person name="Fraser C.M."/>
        </authorList>
    </citation>
    <scope>NUCLEOTIDE SEQUENCE [LARGE SCALE GENOMIC DNA]</scope>
    <source>
        <strain>ATCC BAA-611 / 2603 V/R</strain>
    </source>
</reference>
<sequence>MKELSSAQIRQMWLDFWKSKGHSVEPSANLVPVNDPTLLWINSGVATLKKYFDGSVIPENPRITNAQKSIRTNDIENVGKTARHHTMFEMLGNFSIGDYFRDEAIEWGFELLTSPEWFDFPKDKLYMTYYPDDKDSYNRWIACGVEPSHLVPIEDNFWEIGAGPSGPDTEIFFDRGEDFDPENIGLRLLAEDIENDRYIEIWNIVLSQFNADPAVPRSEYKELPNKNIDTGAGLERLAAVMQGAKTNFETDLFMPIIREVEKLSGKTYDPDGDNMSFKVIADHIRALSFAIGDGALPGNEGRGYVLRRLLRRAVMHGRRLGINETFLYKLVPTVGQIMESYYPEVLEKRDFIEKIVKREEETFARTIDAGSGHLDSLLAQLKAEGKDTLEGKDIFKLYDTYGFPVELTEELAEDAGYKIDHEGFKSAMKEQQDRARAAVVKGGSMGMQNETLAGIVEESRFEYDTYSLESSLSVIIADNERTEAVSEGQALLVFAQTPFYAEMGGQVADHGVIKNDKGDTVAEVVDVQKAPNGQPLHTVNVLASLSVGTNYTLEINKERRLAVEKNHTATHLLHAALHNVIGEHATQAGSLNEEEFLRFDFTHFEAVSNEELRHIEQEVNEQIWNDLTITTTETDVETAKEMGAMALFGEKYGKVVRVVQIGNYSVELCGGTHLNNSSEIGLFKIVKEEGIGSGTRRIIAVTGRQAFEAYRNQEDALKEIAATVKAPQLKDAAAKVQALSDSLRDLQKENVELKEKAAAAAAGDVFKDIQEAKGVRFIASQVDVADAGALRTFADNWKQKDYSDVLVLVAAIGEKVNVLVASKTKDVHAGNMIKGLAPIVAGRGGGKPDMAMAGGSDASKIAELLAAVAENL</sequence>
<protein>
    <recommendedName>
        <fullName evidence="1">Alanine--tRNA ligase</fullName>
        <ecNumber evidence="1">6.1.1.7</ecNumber>
    </recommendedName>
    <alternativeName>
        <fullName evidence="1">Alanyl-tRNA synthetase</fullName>
        <shortName evidence="1">AlaRS</shortName>
    </alternativeName>
</protein>
<proteinExistence type="inferred from homology"/>
<dbReference type="EC" id="6.1.1.7" evidence="1"/>
<dbReference type="EMBL" id="AE009948">
    <property type="protein sequence ID" value="AAM99697.1"/>
    <property type="molecule type" value="Genomic_DNA"/>
</dbReference>
<dbReference type="RefSeq" id="NP_687825.1">
    <property type="nucleotide sequence ID" value="NC_004116.1"/>
</dbReference>
<dbReference type="RefSeq" id="WP_000661554.1">
    <property type="nucleotide sequence ID" value="NC_004116.1"/>
</dbReference>
<dbReference type="SMR" id="Q8E0C4"/>
<dbReference type="STRING" id="208435.SAG0810"/>
<dbReference type="KEGG" id="sag:SAG0810"/>
<dbReference type="PATRIC" id="fig|208435.3.peg.816"/>
<dbReference type="HOGENOM" id="CLU_004485_1_1_9"/>
<dbReference type="OrthoDB" id="9803884at2"/>
<dbReference type="Proteomes" id="UP000000821">
    <property type="component" value="Chromosome"/>
</dbReference>
<dbReference type="GO" id="GO:0005829">
    <property type="term" value="C:cytosol"/>
    <property type="evidence" value="ECO:0007669"/>
    <property type="project" value="TreeGrafter"/>
</dbReference>
<dbReference type="GO" id="GO:0004813">
    <property type="term" value="F:alanine-tRNA ligase activity"/>
    <property type="evidence" value="ECO:0007669"/>
    <property type="project" value="UniProtKB-UniRule"/>
</dbReference>
<dbReference type="GO" id="GO:0002161">
    <property type="term" value="F:aminoacyl-tRNA deacylase activity"/>
    <property type="evidence" value="ECO:0007669"/>
    <property type="project" value="TreeGrafter"/>
</dbReference>
<dbReference type="GO" id="GO:0005524">
    <property type="term" value="F:ATP binding"/>
    <property type="evidence" value="ECO:0007669"/>
    <property type="project" value="UniProtKB-UniRule"/>
</dbReference>
<dbReference type="GO" id="GO:0140096">
    <property type="term" value="F:catalytic activity, acting on a protein"/>
    <property type="evidence" value="ECO:0007669"/>
    <property type="project" value="UniProtKB-ARBA"/>
</dbReference>
<dbReference type="GO" id="GO:0016740">
    <property type="term" value="F:transferase activity"/>
    <property type="evidence" value="ECO:0007669"/>
    <property type="project" value="UniProtKB-ARBA"/>
</dbReference>
<dbReference type="GO" id="GO:0000049">
    <property type="term" value="F:tRNA binding"/>
    <property type="evidence" value="ECO:0007669"/>
    <property type="project" value="UniProtKB-KW"/>
</dbReference>
<dbReference type="GO" id="GO:0008270">
    <property type="term" value="F:zinc ion binding"/>
    <property type="evidence" value="ECO:0007669"/>
    <property type="project" value="UniProtKB-UniRule"/>
</dbReference>
<dbReference type="GO" id="GO:0006419">
    <property type="term" value="P:alanyl-tRNA aminoacylation"/>
    <property type="evidence" value="ECO:0007669"/>
    <property type="project" value="UniProtKB-UniRule"/>
</dbReference>
<dbReference type="CDD" id="cd00673">
    <property type="entry name" value="AlaRS_core"/>
    <property type="match status" value="1"/>
</dbReference>
<dbReference type="FunFam" id="3.10.310.40:FF:000001">
    <property type="entry name" value="Alanine--tRNA ligase"/>
    <property type="match status" value="1"/>
</dbReference>
<dbReference type="FunFam" id="3.30.54.20:FF:000001">
    <property type="entry name" value="Alanine--tRNA ligase"/>
    <property type="match status" value="1"/>
</dbReference>
<dbReference type="FunFam" id="3.30.930.10:FF:000046">
    <property type="entry name" value="Alanine--tRNA ligase"/>
    <property type="match status" value="1"/>
</dbReference>
<dbReference type="FunFam" id="3.30.980.10:FF:000004">
    <property type="entry name" value="Alanine--tRNA ligase, cytoplasmic"/>
    <property type="match status" value="1"/>
</dbReference>
<dbReference type="Gene3D" id="2.40.30.130">
    <property type="match status" value="1"/>
</dbReference>
<dbReference type="Gene3D" id="3.10.310.40">
    <property type="match status" value="1"/>
</dbReference>
<dbReference type="Gene3D" id="3.30.54.20">
    <property type="match status" value="1"/>
</dbReference>
<dbReference type="Gene3D" id="6.10.250.550">
    <property type="match status" value="1"/>
</dbReference>
<dbReference type="Gene3D" id="3.30.930.10">
    <property type="entry name" value="Bira Bifunctional Protein, Domain 2"/>
    <property type="match status" value="1"/>
</dbReference>
<dbReference type="Gene3D" id="3.30.980.10">
    <property type="entry name" value="Threonyl-trna Synthetase, Chain A, domain 2"/>
    <property type="match status" value="1"/>
</dbReference>
<dbReference type="HAMAP" id="MF_00036_B">
    <property type="entry name" value="Ala_tRNA_synth_B"/>
    <property type="match status" value="1"/>
</dbReference>
<dbReference type="InterPro" id="IPR045864">
    <property type="entry name" value="aa-tRNA-synth_II/BPL/LPL"/>
</dbReference>
<dbReference type="InterPro" id="IPR002318">
    <property type="entry name" value="Ala-tRNA-lgiase_IIc"/>
</dbReference>
<dbReference type="InterPro" id="IPR018162">
    <property type="entry name" value="Ala-tRNA-ligase_IIc_anticod-bd"/>
</dbReference>
<dbReference type="InterPro" id="IPR018165">
    <property type="entry name" value="Ala-tRNA-synth_IIc_core"/>
</dbReference>
<dbReference type="InterPro" id="IPR018164">
    <property type="entry name" value="Ala-tRNA-synth_IIc_N"/>
</dbReference>
<dbReference type="InterPro" id="IPR050058">
    <property type="entry name" value="Ala-tRNA_ligase"/>
</dbReference>
<dbReference type="InterPro" id="IPR023033">
    <property type="entry name" value="Ala_tRNA_ligase_euk/bac"/>
</dbReference>
<dbReference type="InterPro" id="IPR003156">
    <property type="entry name" value="DHHA1_dom"/>
</dbReference>
<dbReference type="InterPro" id="IPR018163">
    <property type="entry name" value="Thr/Ala-tRNA-synth_IIc_edit"/>
</dbReference>
<dbReference type="InterPro" id="IPR009000">
    <property type="entry name" value="Transl_B-barrel_sf"/>
</dbReference>
<dbReference type="InterPro" id="IPR012947">
    <property type="entry name" value="tRNA_SAD"/>
</dbReference>
<dbReference type="NCBIfam" id="TIGR00344">
    <property type="entry name" value="alaS"/>
    <property type="match status" value="1"/>
</dbReference>
<dbReference type="PANTHER" id="PTHR11777:SF9">
    <property type="entry name" value="ALANINE--TRNA LIGASE, CYTOPLASMIC"/>
    <property type="match status" value="1"/>
</dbReference>
<dbReference type="PANTHER" id="PTHR11777">
    <property type="entry name" value="ALANYL-TRNA SYNTHETASE"/>
    <property type="match status" value="1"/>
</dbReference>
<dbReference type="Pfam" id="PF02272">
    <property type="entry name" value="DHHA1"/>
    <property type="match status" value="1"/>
</dbReference>
<dbReference type="Pfam" id="PF01411">
    <property type="entry name" value="tRNA-synt_2c"/>
    <property type="match status" value="1"/>
</dbReference>
<dbReference type="Pfam" id="PF07973">
    <property type="entry name" value="tRNA_SAD"/>
    <property type="match status" value="1"/>
</dbReference>
<dbReference type="PRINTS" id="PR00980">
    <property type="entry name" value="TRNASYNTHALA"/>
</dbReference>
<dbReference type="SMART" id="SM00863">
    <property type="entry name" value="tRNA_SAD"/>
    <property type="match status" value="1"/>
</dbReference>
<dbReference type="SUPFAM" id="SSF55681">
    <property type="entry name" value="Class II aaRS and biotin synthetases"/>
    <property type="match status" value="1"/>
</dbReference>
<dbReference type="SUPFAM" id="SSF101353">
    <property type="entry name" value="Putative anticodon-binding domain of alanyl-tRNA synthetase (AlaRS)"/>
    <property type="match status" value="1"/>
</dbReference>
<dbReference type="SUPFAM" id="SSF55186">
    <property type="entry name" value="ThrRS/AlaRS common domain"/>
    <property type="match status" value="1"/>
</dbReference>
<dbReference type="SUPFAM" id="SSF50447">
    <property type="entry name" value="Translation proteins"/>
    <property type="match status" value="1"/>
</dbReference>
<dbReference type="PROSITE" id="PS50860">
    <property type="entry name" value="AA_TRNA_LIGASE_II_ALA"/>
    <property type="match status" value="1"/>
</dbReference>
<comment type="function">
    <text evidence="1">Catalyzes the attachment of alanine to tRNA(Ala) in a two-step reaction: alanine is first activated by ATP to form Ala-AMP and then transferred to the acceptor end of tRNA(Ala). Also edits incorrectly charged Ser-tRNA(Ala) and Gly-tRNA(Ala) via its editing domain.</text>
</comment>
<comment type="catalytic activity">
    <reaction evidence="1">
        <text>tRNA(Ala) + L-alanine + ATP = L-alanyl-tRNA(Ala) + AMP + diphosphate</text>
        <dbReference type="Rhea" id="RHEA:12540"/>
        <dbReference type="Rhea" id="RHEA-COMP:9657"/>
        <dbReference type="Rhea" id="RHEA-COMP:9923"/>
        <dbReference type="ChEBI" id="CHEBI:30616"/>
        <dbReference type="ChEBI" id="CHEBI:33019"/>
        <dbReference type="ChEBI" id="CHEBI:57972"/>
        <dbReference type="ChEBI" id="CHEBI:78442"/>
        <dbReference type="ChEBI" id="CHEBI:78497"/>
        <dbReference type="ChEBI" id="CHEBI:456215"/>
        <dbReference type="EC" id="6.1.1.7"/>
    </reaction>
</comment>
<comment type="cofactor">
    <cofactor evidence="1">
        <name>Zn(2+)</name>
        <dbReference type="ChEBI" id="CHEBI:29105"/>
    </cofactor>
    <text evidence="1">Binds 1 zinc ion per subunit.</text>
</comment>
<comment type="subcellular location">
    <subcellularLocation>
        <location evidence="1">Cytoplasm</location>
    </subcellularLocation>
</comment>
<comment type="domain">
    <text evidence="1">Consists of three domains; the N-terminal catalytic domain, the editing domain and the C-terminal C-Ala domain. The editing domain removes incorrectly charged amino acids, while the C-Ala domain, along with tRNA(Ala), serves as a bridge to cooperatively bring together the editing and aminoacylation centers thus stimulating deacylation of misacylated tRNAs.</text>
</comment>
<comment type="similarity">
    <text evidence="1">Belongs to the class-II aminoacyl-tRNA synthetase family.</text>
</comment>
<name>SYA_STRA5</name>
<feature type="chain" id="PRO_0000075212" description="Alanine--tRNA ligase">
    <location>
        <begin position="1"/>
        <end position="872"/>
    </location>
</feature>
<feature type="binding site" evidence="1">
    <location>
        <position position="567"/>
    </location>
    <ligand>
        <name>Zn(2+)</name>
        <dbReference type="ChEBI" id="CHEBI:29105"/>
    </ligand>
</feature>
<feature type="binding site" evidence="1">
    <location>
        <position position="571"/>
    </location>
    <ligand>
        <name>Zn(2+)</name>
        <dbReference type="ChEBI" id="CHEBI:29105"/>
    </ligand>
</feature>
<feature type="binding site" evidence="1">
    <location>
        <position position="669"/>
    </location>
    <ligand>
        <name>Zn(2+)</name>
        <dbReference type="ChEBI" id="CHEBI:29105"/>
    </ligand>
</feature>
<feature type="binding site" evidence="1">
    <location>
        <position position="673"/>
    </location>
    <ligand>
        <name>Zn(2+)</name>
        <dbReference type="ChEBI" id="CHEBI:29105"/>
    </ligand>
</feature>
<gene>
    <name evidence="1" type="primary">alaS</name>
    <name type="ordered locus">SAG0810</name>
</gene>